<comment type="function">
    <text evidence="4 7 8 9 11 12 13">Essential proto-oncogenic transcriptional regulator necessary for development and differentiation of erythroid and megakaryocytic lineages. Component of a RCOR-GFI-KDM1A-HDAC complex that suppresses, via histone deacetylase (HDAC) recruitment, a number of genes implicated in multilineage blood cell development and controls hematopoietic differentiation. Transcriptional repressor or activator depending on both promoter and cell type context; represses promoter activity of SOCS1 and SOCS3 and thus, may regulate cytokine signaling pathways. Cooperates with GATA1 to repress target gene transcription, such as the apoptosis regulator BCL2L1; GFI1B silencing in leukemic cell lines markedly increase apoptosis rate. Inhibits down-regulation of MYC and MYB as well as the cyclin-dependent kinase inhibitor CDKN1A/P21WAF1 in IL6-treated myelomonocytic cells. Represses expression of GATA3 in T-cell lymphomas and inhibits GATA1-mediated transcription; as GATA1 also mediates erythroid GFI1B transcription, both GATA1 and GFI1B participate in a feedback regulatory pathway controlling the expression of GFI1B gene in erythroid cells. Suppresses GATA1-mediated stimulation of GFI1B promoter through protein interaction. Binds to gamma-satellite DNA and to its own promoter, auto-repressing its own expression. Alters histone methylation by recruiting histone methyltransferase to target genes promoters. Plays a role in heterochromatin formation.</text>
</comment>
<comment type="subunit">
    <text evidence="1 5 7 8 13 14">Component of a RCOR-GFI-KDM1A-HDAC complex. Interacts directly with RCOR1, KDM1A and HDAC2 (By similarity). Forms a complex with GATA1. Interacts with histone methyltransferases EHMT2 and SUV39H1. Interacts with ARIH2 (via RING-type 2). Interacts with RUNX1T1.</text>
</comment>
<comment type="interaction">
    <interactant intactId="EBI-946212">
        <id>Q5VTD9</id>
    </interactant>
    <interactant intactId="EBI-946194">
        <id>Q9HC77</id>
        <label>CENPJ</label>
    </interactant>
    <organismsDiffer>false</organismsDiffer>
    <experiments>2</experiments>
</comment>
<comment type="interaction">
    <interactant intactId="EBI-946212">
        <id>Q5VTD9</id>
    </interactant>
    <interactant intactId="EBI-946223">
        <id>Q9Y219</id>
        <label>JAG2</label>
    </interactant>
    <organismsDiffer>false</organismsDiffer>
    <experiments>2</experiments>
</comment>
<comment type="interaction">
    <interactant intactId="EBI-946212">
        <id>Q5VTD9</id>
    </interactant>
    <interactant intactId="EBI-946274">
        <id>Q99435</id>
        <label>NELL2</label>
    </interactant>
    <organismsDiffer>false</organismsDiffer>
    <experiments>2</experiments>
</comment>
<comment type="subcellular location">
    <subcellularLocation>
        <location evidence="8">Nucleus</location>
    </subcellularLocation>
</comment>
<comment type="alternative products">
    <event type="alternative splicing"/>
    <isoform>
        <id>Q5VTD9-1</id>
        <name>1</name>
        <name>p37</name>
        <sequence type="displayed"/>
    </isoform>
    <isoform>
        <id>Q5VTD9-2</id>
        <name>2</name>
        <name>p32</name>
        <sequence type="described" ref="VSP_028459"/>
    </isoform>
</comment>
<comment type="tissue specificity">
    <text evidence="4 11 18">Expressed in bone marrow and fetal liver, but also detectable in fetal spleen, fetal thymus, and testes. Detected in hematopoietic stem cells, erythroblasts, and megakaryocytes. Overexpressed in bone marrow of patients with erythroleukemia and megakaryocytic leukemia as well as in their corresponding leukemic cell lines, and markedly repressed in severe aplastic anemia (SAA).</text>
</comment>
<comment type="induction">
    <text evidence="6">By GATA1 which binds to GFI1B promoter in cooperation with the transcription factor NFYA. Target gene of transcription factor E2-alpha/TCF3 that promotes growth arrest and apoptosis in lymphomas.</text>
</comment>
<comment type="domain">
    <text evidence="1">The zinc finger domains are essential for erythroid expansion and acts as an activation domain whereas non finger domain serves as repression domain.</text>
</comment>
<comment type="domain">
    <text evidence="1">The SNAG domain of GFIs is required for nuclear location and for interaction with some corepressors.</text>
</comment>
<comment type="PTM">
    <text evidence="15">Methylation at Lys-8 in the SNAG domain seems required for the recruitment of the corepressor complex.</text>
</comment>
<comment type="disease" evidence="16 17">
    <disease id="DI-04008">
        <name>Bleeding disorder, platelet-type, 17</name>
        <acronym>BDPLT17</acronym>
        <description>An autosomal dominant disorder characterized by increased bleeding tendency due to platelet dysfunction, and associated with macrothrombocytopenia and red cell anisopoikilocytosis. Platelets appear abnormal on light microscopy, while electron microscopy shows a heterogeneous decrease of alpha granules within platelets. Bone marrow biopsy shows increased numbers of abnormal megakaryocytes, suggesting a defect in megakaryopoiesis and platelet production. The severity of bleeding is variable with some affected individuals experiencing spontaneous bleeding while other exhibit only abnormal bleeding with surgery.</description>
        <dbReference type="MIM" id="187900"/>
    </disease>
    <text>The disease is caused by variants affecting the gene represented in this entry.</text>
</comment>
<comment type="miscellaneous">
    <molecule>Isoform 2</molecule>
    <text evidence="20">Essential for erythroid differentiation. Binds to target gene promoters and associates with the LSD1-CoREST repressor complex more efficiently than the major isoform 1.</text>
</comment>
<comment type="online information" name="Atlas of Genetics and Cytogenetics in Oncology and Haematology">
    <link uri="https://atlasgeneticsoncology.org/gene/40707/GFI1B"/>
</comment>
<gene>
    <name type="primary">GFI1B</name>
</gene>
<proteinExistence type="evidence at protein level"/>
<name>GFI1B_HUMAN</name>
<dbReference type="EMBL" id="AF081946">
    <property type="protein sequence ID" value="AAD08672.1"/>
    <property type="molecule type" value="mRNA"/>
</dbReference>
<dbReference type="EMBL" id="AY428733">
    <property type="protein sequence ID" value="AAR06639.1"/>
    <property type="molecule type" value="mRNA"/>
</dbReference>
<dbReference type="EMBL" id="CR536546">
    <property type="protein sequence ID" value="CAG38783.1"/>
    <property type="molecule type" value="mRNA"/>
</dbReference>
<dbReference type="EMBL" id="AL593851">
    <property type="status" value="NOT_ANNOTATED_CDS"/>
    <property type="molecule type" value="Genomic_DNA"/>
</dbReference>
<dbReference type="EMBL" id="CH471090">
    <property type="protein sequence ID" value="EAW88025.1"/>
    <property type="molecule type" value="Genomic_DNA"/>
</dbReference>
<dbReference type="EMBL" id="BC043371">
    <property type="protein sequence ID" value="AAH43371.1"/>
    <property type="molecule type" value="mRNA"/>
</dbReference>
<dbReference type="EMBL" id="BC035626">
    <property type="status" value="NOT_ANNOTATED_CDS"/>
    <property type="molecule type" value="mRNA"/>
</dbReference>
<dbReference type="CCDS" id="CCDS48049.1">
    <molecule id="Q5VTD9-2"/>
</dbReference>
<dbReference type="CCDS" id="CCDS6957.1">
    <molecule id="Q5VTD9-1"/>
</dbReference>
<dbReference type="RefSeq" id="NP_001128503.1">
    <molecule id="Q5VTD9-2"/>
    <property type="nucleotide sequence ID" value="NM_001135031.2"/>
</dbReference>
<dbReference type="RefSeq" id="NP_001364233.1">
    <molecule id="Q5VTD9-1"/>
    <property type="nucleotide sequence ID" value="NM_001377304.1"/>
</dbReference>
<dbReference type="RefSeq" id="NP_001364234.1">
    <molecule id="Q5VTD9-2"/>
    <property type="nucleotide sequence ID" value="NM_001377305.1"/>
</dbReference>
<dbReference type="RefSeq" id="NP_004179.3">
    <molecule id="Q5VTD9-1"/>
    <property type="nucleotide sequence ID" value="NM_004188.6"/>
</dbReference>
<dbReference type="RefSeq" id="XP_011517372.1">
    <property type="nucleotide sequence ID" value="XM_011519070.2"/>
</dbReference>
<dbReference type="RefSeq" id="XP_016870665.1">
    <property type="nucleotide sequence ID" value="XM_017015176.1"/>
</dbReference>
<dbReference type="RefSeq" id="XP_054219897.1">
    <molecule id="Q5VTD9-1"/>
    <property type="nucleotide sequence ID" value="XM_054363922.1"/>
</dbReference>
<dbReference type="RefSeq" id="XP_054219898.1">
    <molecule id="Q5VTD9-2"/>
    <property type="nucleotide sequence ID" value="XM_054363923.1"/>
</dbReference>
<dbReference type="SMR" id="Q5VTD9"/>
<dbReference type="BioGRID" id="113924">
    <property type="interactions" value="135"/>
</dbReference>
<dbReference type="FunCoup" id="Q5VTD9">
    <property type="interactions" value="356"/>
</dbReference>
<dbReference type="IntAct" id="Q5VTD9">
    <property type="interactions" value="72"/>
</dbReference>
<dbReference type="STRING" id="9606.ENSP00000344782"/>
<dbReference type="iPTMnet" id="Q5VTD9"/>
<dbReference type="PhosphoSitePlus" id="Q5VTD9"/>
<dbReference type="BioMuta" id="GFI1B"/>
<dbReference type="DMDM" id="74756792"/>
<dbReference type="MassIVE" id="Q5VTD9"/>
<dbReference type="PaxDb" id="9606-ENSP00000344782"/>
<dbReference type="PeptideAtlas" id="Q5VTD9"/>
<dbReference type="ProteomicsDB" id="65320">
    <molecule id="Q5VTD9-1"/>
</dbReference>
<dbReference type="ProteomicsDB" id="65321">
    <molecule id="Q5VTD9-2"/>
</dbReference>
<dbReference type="Pumba" id="Q5VTD9"/>
<dbReference type="Antibodypedia" id="1815">
    <property type="antibodies" value="118 antibodies from 26 providers"/>
</dbReference>
<dbReference type="DNASU" id="8328"/>
<dbReference type="Ensembl" id="ENST00000339463.7">
    <molecule id="Q5VTD9-1"/>
    <property type="protein sequence ID" value="ENSP00000344782.3"/>
    <property type="gene ID" value="ENSG00000165702.15"/>
</dbReference>
<dbReference type="Ensembl" id="ENST00000372122.4">
    <molecule id="Q5VTD9-1"/>
    <property type="protein sequence ID" value="ENSP00000361195.1"/>
    <property type="gene ID" value="ENSG00000165702.15"/>
</dbReference>
<dbReference type="Ensembl" id="ENST00000372123.5">
    <molecule id="Q5VTD9-2"/>
    <property type="protein sequence ID" value="ENSP00000361196.1"/>
    <property type="gene ID" value="ENSG00000165702.15"/>
</dbReference>
<dbReference type="GeneID" id="8328"/>
<dbReference type="KEGG" id="hsa:8328"/>
<dbReference type="MANE-Select" id="ENST00000372122.4">
    <property type="protein sequence ID" value="ENSP00000361195.1"/>
    <property type="RefSeq nucleotide sequence ID" value="NM_001377304.1"/>
    <property type="RefSeq protein sequence ID" value="NP_001364233.1"/>
</dbReference>
<dbReference type="UCSC" id="uc004ccg.4">
    <molecule id="Q5VTD9-1"/>
    <property type="organism name" value="human"/>
</dbReference>
<dbReference type="AGR" id="HGNC:4238"/>
<dbReference type="CTD" id="8328"/>
<dbReference type="DisGeNET" id="8328"/>
<dbReference type="GeneCards" id="GFI1B"/>
<dbReference type="HGNC" id="HGNC:4238">
    <property type="gene designation" value="GFI1B"/>
</dbReference>
<dbReference type="HPA" id="ENSG00000165702">
    <property type="expression patterns" value="Tissue enriched (bone)"/>
</dbReference>
<dbReference type="MalaCards" id="GFI1B"/>
<dbReference type="MIM" id="187900">
    <property type="type" value="phenotype"/>
</dbReference>
<dbReference type="MIM" id="604383">
    <property type="type" value="gene"/>
</dbReference>
<dbReference type="neXtProt" id="NX_Q5VTD9"/>
<dbReference type="OpenTargets" id="ENSG00000165702"/>
<dbReference type="Orphanet" id="734">
    <property type="disease" value="Alpha delta granule deficiency"/>
</dbReference>
<dbReference type="Orphanet" id="140957">
    <property type="disease" value="Autosomal dominant macrothrombocytopenia"/>
</dbReference>
<dbReference type="PharmGKB" id="PA28649"/>
<dbReference type="VEuPathDB" id="HostDB:ENSG00000165702"/>
<dbReference type="eggNOG" id="KOG1721">
    <property type="taxonomic scope" value="Eukaryota"/>
</dbReference>
<dbReference type="GeneTree" id="ENSGT00940000160010"/>
<dbReference type="HOGENOM" id="CLU_002678_94_9_1"/>
<dbReference type="InParanoid" id="Q5VTD9"/>
<dbReference type="OrthoDB" id="6155966at2759"/>
<dbReference type="PAN-GO" id="Q5VTD9">
    <property type="GO annotations" value="5 GO annotations based on evolutionary models"/>
</dbReference>
<dbReference type="PhylomeDB" id="Q5VTD9"/>
<dbReference type="TreeFam" id="TF350784"/>
<dbReference type="PathwayCommons" id="Q5VTD9"/>
<dbReference type="SignaLink" id="Q5VTD9"/>
<dbReference type="SIGNOR" id="Q5VTD9"/>
<dbReference type="BioGRID-ORCS" id="8328">
    <property type="hits" value="42 hits in 1166 CRISPR screens"/>
</dbReference>
<dbReference type="ChiTaRS" id="GFI1B">
    <property type="organism name" value="human"/>
</dbReference>
<dbReference type="GeneWiki" id="GFI1B"/>
<dbReference type="GenomeRNAi" id="8328"/>
<dbReference type="Pharos" id="Q5VTD9">
    <property type="development level" value="Tbio"/>
</dbReference>
<dbReference type="PRO" id="PR:Q5VTD9"/>
<dbReference type="Proteomes" id="UP000005640">
    <property type="component" value="Chromosome 9"/>
</dbReference>
<dbReference type="RNAct" id="Q5VTD9">
    <property type="molecule type" value="protein"/>
</dbReference>
<dbReference type="Bgee" id="ENSG00000165702">
    <property type="expression patterns" value="Expressed in sperm and 100 other cell types or tissues"/>
</dbReference>
<dbReference type="ExpressionAtlas" id="Q5VTD9">
    <property type="expression patterns" value="baseline and differential"/>
</dbReference>
<dbReference type="GO" id="GO:0016363">
    <property type="term" value="C:nuclear matrix"/>
    <property type="evidence" value="ECO:0000314"/>
    <property type="project" value="UniProtKB"/>
</dbReference>
<dbReference type="GO" id="GO:0005654">
    <property type="term" value="C:nucleoplasm"/>
    <property type="evidence" value="ECO:0000314"/>
    <property type="project" value="HPA"/>
</dbReference>
<dbReference type="GO" id="GO:0005634">
    <property type="term" value="C:nucleus"/>
    <property type="evidence" value="ECO:0000314"/>
    <property type="project" value="UniProtKB"/>
</dbReference>
<dbReference type="GO" id="GO:0005886">
    <property type="term" value="C:plasma membrane"/>
    <property type="evidence" value="ECO:0000314"/>
    <property type="project" value="HPA"/>
</dbReference>
<dbReference type="GO" id="GO:0005667">
    <property type="term" value="C:transcription regulator complex"/>
    <property type="evidence" value="ECO:0000314"/>
    <property type="project" value="BHF-UCL"/>
</dbReference>
<dbReference type="GO" id="GO:0001228">
    <property type="term" value="F:DNA-binding transcription activator activity, RNA polymerase II-specific"/>
    <property type="evidence" value="ECO:0000318"/>
    <property type="project" value="GO_Central"/>
</dbReference>
<dbReference type="GO" id="GO:0000981">
    <property type="term" value="F:DNA-binding transcription factor activity, RNA polymerase II-specific"/>
    <property type="evidence" value="ECO:0000303"/>
    <property type="project" value="ARUK-UCL"/>
</dbReference>
<dbReference type="GO" id="GO:0000978">
    <property type="term" value="F:RNA polymerase II cis-regulatory region sequence-specific DNA binding"/>
    <property type="evidence" value="ECO:0000318"/>
    <property type="project" value="GO_Central"/>
</dbReference>
<dbReference type="GO" id="GO:0061629">
    <property type="term" value="F:RNA polymerase II-specific DNA-binding transcription factor binding"/>
    <property type="evidence" value="ECO:0000353"/>
    <property type="project" value="BHF-UCL"/>
</dbReference>
<dbReference type="GO" id="GO:1990837">
    <property type="term" value="F:sequence-specific double-stranded DNA binding"/>
    <property type="evidence" value="ECO:0000314"/>
    <property type="project" value="ARUK-UCL"/>
</dbReference>
<dbReference type="GO" id="GO:0008270">
    <property type="term" value="F:zinc ion binding"/>
    <property type="evidence" value="ECO:0007669"/>
    <property type="project" value="UniProtKB-KW"/>
</dbReference>
<dbReference type="GO" id="GO:0006325">
    <property type="term" value="P:chromatin organization"/>
    <property type="evidence" value="ECO:0007669"/>
    <property type="project" value="UniProtKB-KW"/>
</dbReference>
<dbReference type="GO" id="GO:2000134">
    <property type="term" value="P:negative regulation of G1/S transition of mitotic cell cycle"/>
    <property type="evidence" value="ECO:0000304"/>
    <property type="project" value="GO_Central"/>
</dbReference>
<dbReference type="GO" id="GO:0000122">
    <property type="term" value="P:negative regulation of transcription by RNA polymerase II"/>
    <property type="evidence" value="ECO:0000314"/>
    <property type="project" value="GO_Central"/>
</dbReference>
<dbReference type="GO" id="GO:1903706">
    <property type="term" value="P:regulation of hemopoiesis"/>
    <property type="evidence" value="ECO:0000318"/>
    <property type="project" value="GO_Central"/>
</dbReference>
<dbReference type="GO" id="GO:0006357">
    <property type="term" value="P:regulation of transcription by RNA polymerase II"/>
    <property type="evidence" value="ECO:0000318"/>
    <property type="project" value="GO_Central"/>
</dbReference>
<dbReference type="FunFam" id="3.30.160.60:FF:000489">
    <property type="entry name" value="Zinc finger protein Gfi-1"/>
    <property type="match status" value="1"/>
</dbReference>
<dbReference type="FunFam" id="3.30.160.60:FF:000827">
    <property type="entry name" value="Zinc finger protein Gfi-1"/>
    <property type="match status" value="1"/>
</dbReference>
<dbReference type="FunFam" id="3.30.160.60:FF:000148">
    <property type="entry name" value="zinc finger protein Gfi-1"/>
    <property type="match status" value="1"/>
</dbReference>
<dbReference type="FunFam" id="3.30.160.60:FF:000245">
    <property type="entry name" value="zinc finger protein Gfi-1"/>
    <property type="match status" value="1"/>
</dbReference>
<dbReference type="FunFam" id="3.30.160.60:FF:000208">
    <property type="entry name" value="zinc finger protein Gfi-1b"/>
    <property type="match status" value="1"/>
</dbReference>
<dbReference type="FunFam" id="3.30.160.60:FF:000432">
    <property type="entry name" value="zinc finger protein Gfi-1b isoform X1"/>
    <property type="match status" value="1"/>
</dbReference>
<dbReference type="Gene3D" id="3.30.160.60">
    <property type="entry name" value="Classic Zinc Finger"/>
    <property type="match status" value="6"/>
</dbReference>
<dbReference type="InterPro" id="IPR036236">
    <property type="entry name" value="Znf_C2H2_sf"/>
</dbReference>
<dbReference type="InterPro" id="IPR013087">
    <property type="entry name" value="Znf_C2H2_type"/>
</dbReference>
<dbReference type="PANTHER" id="PTHR23226:SF419">
    <property type="entry name" value="FI21258P1-RELATED"/>
    <property type="match status" value="1"/>
</dbReference>
<dbReference type="PANTHER" id="PTHR23226">
    <property type="entry name" value="ZINC FINGER AND SCAN DOMAIN-CONTAINING"/>
    <property type="match status" value="1"/>
</dbReference>
<dbReference type="Pfam" id="PF00096">
    <property type="entry name" value="zf-C2H2"/>
    <property type="match status" value="6"/>
</dbReference>
<dbReference type="SMART" id="SM00355">
    <property type="entry name" value="ZnF_C2H2"/>
    <property type="match status" value="6"/>
</dbReference>
<dbReference type="SUPFAM" id="SSF57667">
    <property type="entry name" value="beta-beta-alpha zinc fingers"/>
    <property type="match status" value="3"/>
</dbReference>
<dbReference type="PROSITE" id="PS00028">
    <property type="entry name" value="ZINC_FINGER_C2H2_1"/>
    <property type="match status" value="6"/>
</dbReference>
<dbReference type="PROSITE" id="PS50157">
    <property type="entry name" value="ZINC_FINGER_C2H2_2"/>
    <property type="match status" value="6"/>
</dbReference>
<keyword id="KW-0010">Activator</keyword>
<keyword id="KW-0025">Alternative splicing</keyword>
<keyword id="KW-0156">Chromatin regulator</keyword>
<keyword id="KW-0217">Developmental protein</keyword>
<keyword id="KW-0238">DNA-binding</keyword>
<keyword id="KW-0479">Metal-binding</keyword>
<keyword id="KW-0488">Methylation</keyword>
<keyword id="KW-0539">Nucleus</keyword>
<keyword id="KW-1267">Proteomics identification</keyword>
<keyword id="KW-0656">Proto-oncogene</keyword>
<keyword id="KW-1185">Reference proteome</keyword>
<keyword id="KW-0677">Repeat</keyword>
<keyword id="KW-0678">Repressor</keyword>
<keyword id="KW-0804">Transcription</keyword>
<keyword id="KW-0805">Transcription regulation</keyword>
<keyword id="KW-0862">Zinc</keyword>
<keyword id="KW-0863">Zinc-finger</keyword>
<feature type="chain" id="PRO_0000306327" description="Zinc finger protein Gfi-1b">
    <location>
        <begin position="1"/>
        <end position="330"/>
    </location>
</feature>
<feature type="zinc finger region" description="C2H2-type 1" evidence="2">
    <location>
        <begin position="163"/>
        <end position="186"/>
    </location>
</feature>
<feature type="zinc finger region" description="C2H2-type 2" evidence="2">
    <location>
        <begin position="192"/>
        <end position="214"/>
    </location>
</feature>
<feature type="zinc finger region" description="C2H2-type 3" evidence="2">
    <location>
        <begin position="220"/>
        <end position="242"/>
    </location>
</feature>
<feature type="zinc finger region" description="C2H2-type 4" evidence="2">
    <location>
        <begin position="248"/>
        <end position="270"/>
    </location>
</feature>
<feature type="zinc finger region" description="C2H2-type 5" evidence="2">
    <location>
        <begin position="276"/>
        <end position="298"/>
    </location>
</feature>
<feature type="zinc finger region" description="C2H2-type 6" evidence="2">
    <location>
        <begin position="304"/>
        <end position="327"/>
    </location>
</feature>
<feature type="region of interest" description="Disordered" evidence="3">
    <location>
        <begin position="1"/>
        <end position="42"/>
    </location>
</feature>
<feature type="region of interest" description="SNAG domain">
    <location>
        <begin position="1"/>
        <end position="20"/>
    </location>
</feature>
<feature type="region of interest" description="Interaction with ARIH2" evidence="14">
    <location>
        <begin position="91"/>
        <end position="330"/>
    </location>
</feature>
<feature type="region of interest" description="Mediates interaction with GATA1">
    <location>
        <begin position="164"/>
        <end position="330"/>
    </location>
</feature>
<feature type="modified residue" description="N6,N6-dimethyllysine" evidence="15">
    <location>
        <position position="8"/>
    </location>
</feature>
<feature type="splice variant" id="VSP_028459" description="In isoform 2." evidence="19">
    <location>
        <begin position="171"/>
        <end position="216"/>
    </location>
</feature>
<feature type="sequence variant" id="VAR_035556" description="In a colorectal cancer sample; somatic mutation; dbSNP:rs761044764." evidence="10">
    <original>R</original>
    <variation>H</variation>
    <location>
        <position position="231"/>
    </location>
</feature>
<feature type="mutagenesis site" description="Prevents DNA-binding." evidence="12">
    <original>N</original>
    <variation>S</variation>
    <location>
        <position position="290"/>
    </location>
</feature>
<feature type="sequence conflict" description="In Ref. 2; AAR06639." evidence="20" ref="2">
    <original>K</original>
    <variation>M</variation>
    <location>
        <position position="11"/>
    </location>
</feature>
<feature type="sequence conflict" description="In Ref. 3; CAG38783." evidence="20" ref="3">
    <original>W</original>
    <variation>R</variation>
    <location>
        <position position="27"/>
    </location>
</feature>
<feature type="sequence conflict" description="In Ref. 1; AAD08672." evidence="20" ref="1">
    <original>P</original>
    <variation>H</variation>
    <location>
        <position position="29"/>
    </location>
</feature>
<feature type="sequence conflict" description="In Ref. 2; AAR06639." evidence="20" ref="2">
    <original>R</original>
    <variation>W</variation>
    <location>
        <position position="190"/>
    </location>
</feature>
<feature type="sequence conflict" description="In Ref. 1; AAD08672." evidence="20" ref="1">
    <original>S</original>
    <variation>N</variation>
    <location>
        <position position="219"/>
    </location>
</feature>
<protein>
    <recommendedName>
        <fullName>Zinc finger protein Gfi-1b</fullName>
    </recommendedName>
    <alternativeName>
        <fullName>Growth factor independent protein 1B</fullName>
    </alternativeName>
    <alternativeName>
        <fullName>Potential regulator of CDKN1A translocated in CML</fullName>
    </alternativeName>
</protein>
<evidence type="ECO:0000250" key="1"/>
<evidence type="ECO:0000255" key="2">
    <source>
        <dbReference type="PROSITE-ProRule" id="PRU00042"/>
    </source>
</evidence>
<evidence type="ECO:0000256" key="3">
    <source>
        <dbReference type="SAM" id="MobiDB-lite"/>
    </source>
</evidence>
<evidence type="ECO:0000269" key="4">
    <source>
    </source>
</evidence>
<evidence type="ECO:0000269" key="5">
    <source>
    </source>
</evidence>
<evidence type="ECO:0000269" key="6">
    <source>
    </source>
</evidence>
<evidence type="ECO:0000269" key="7">
    <source>
    </source>
</evidence>
<evidence type="ECO:0000269" key="8">
    <source>
    </source>
</evidence>
<evidence type="ECO:0000269" key="9">
    <source>
    </source>
</evidence>
<evidence type="ECO:0000269" key="10">
    <source>
    </source>
</evidence>
<evidence type="ECO:0000269" key="11">
    <source>
    </source>
</evidence>
<evidence type="ECO:0000269" key="12">
    <source>
    </source>
</evidence>
<evidence type="ECO:0000269" key="13">
    <source>
    </source>
</evidence>
<evidence type="ECO:0000269" key="14">
    <source>
    </source>
</evidence>
<evidence type="ECO:0000269" key="15">
    <source>
    </source>
</evidence>
<evidence type="ECO:0000269" key="16">
    <source>
    </source>
</evidence>
<evidence type="ECO:0000269" key="17">
    <source>
    </source>
</evidence>
<evidence type="ECO:0000269" key="18">
    <source>
    </source>
</evidence>
<evidence type="ECO:0000303" key="19">
    <source>
    </source>
</evidence>
<evidence type="ECO:0000305" key="20"/>
<organism>
    <name type="scientific">Homo sapiens</name>
    <name type="common">Human</name>
    <dbReference type="NCBI Taxonomy" id="9606"/>
    <lineage>
        <taxon>Eukaryota</taxon>
        <taxon>Metazoa</taxon>
        <taxon>Chordata</taxon>
        <taxon>Craniata</taxon>
        <taxon>Vertebrata</taxon>
        <taxon>Euteleostomi</taxon>
        <taxon>Mammalia</taxon>
        <taxon>Eutheria</taxon>
        <taxon>Euarchontoglires</taxon>
        <taxon>Primates</taxon>
        <taxon>Haplorrhini</taxon>
        <taxon>Catarrhini</taxon>
        <taxon>Hominidae</taxon>
        <taxon>Homo</taxon>
    </lineage>
</organism>
<sequence>MPRSFLVKSKKAHTYHQPRVQEDEPLWPPALTPVPRDQAPSNSPVLSTLFPNQCLDWTNLKREPELEQDQNLARMAPAPEGPIVLSRPQDGDSPLSDSPPFYKPSFSWDTLATTYGHSYRQAPSTMQSAFLEHSVSLYGSPLVPSTEPALDFSLRYSPGMDAYHCVKCNKVFSTPHGLEVHVRRSHSGTRPFACDICGKTFGHAVSLEQHTHVHSQERSFECRMCGKAFKRSSTLSTHLLIHSDTRPYPCQFCGKRFHQKSDMKKHTYIHTGEKPHKCQVCGKAFSQSSNLITHSRKHTGFKPFSCELCTKGFQRKVDLRRHRESQHNLK</sequence>
<reference key="1">
    <citation type="journal article" date="1998" name="Genomics">
        <title>The human homologue (GFI1B) of the chicken GFI gene maps to chromosome 9q34.13-A locus frequently altered in hematopoietic diseases.</title>
        <authorList>
            <person name="Roedel B."/>
            <person name="Wagner T."/>
            <person name="Zoernig M."/>
            <person name="Niessing J."/>
            <person name="Moeroey T."/>
        </authorList>
    </citation>
    <scope>NUCLEOTIDE SEQUENCE [MRNA] (ISOFORM 1)</scope>
    <scope>TISSUE SPECIFICITY</scope>
    <source>
        <tissue>Umbilical cord blood</tissue>
    </source>
</reference>
<reference key="2">
    <citation type="journal article" date="2004" name="Nucleic Acids Res.">
        <title>GATA-1 and NF-Y cooperate to mediate erythroid-specific transcription of Gfi-1B gene.</title>
        <authorList>
            <person name="Huang D.Y."/>
            <person name="Kuo Y.Y."/>
            <person name="Lai J.S."/>
            <person name="Suzuki Y."/>
            <person name="Sugano S."/>
            <person name="Chang Z.F."/>
        </authorList>
    </citation>
    <scope>NUCLEOTIDE SEQUENCE [MRNA] (ISOFORM 1)</scope>
    <scope>INDUCTION BY GATA1</scope>
</reference>
<reference key="3">
    <citation type="submission" date="2004-06" db="EMBL/GenBank/DDBJ databases">
        <title>Cloning of human full open reading frames in Gateway(TM) system entry vector (pDONR201).</title>
        <authorList>
            <person name="Halleck A."/>
            <person name="Ebert L."/>
            <person name="Mkoundinya M."/>
            <person name="Schick M."/>
            <person name="Eisenstein S."/>
            <person name="Neubert P."/>
            <person name="Kstrang K."/>
            <person name="Schatten R."/>
            <person name="Shen B."/>
            <person name="Henze S."/>
            <person name="Mar W."/>
            <person name="Korn B."/>
            <person name="Zuo D."/>
            <person name="Hu Y."/>
            <person name="LaBaer J."/>
        </authorList>
    </citation>
    <scope>NUCLEOTIDE SEQUENCE [LARGE SCALE MRNA] (ISOFORM 1)</scope>
</reference>
<reference key="4">
    <citation type="journal article" date="2004" name="Nature">
        <title>DNA sequence and analysis of human chromosome 9.</title>
        <authorList>
            <person name="Humphray S.J."/>
            <person name="Oliver K."/>
            <person name="Hunt A.R."/>
            <person name="Plumb R.W."/>
            <person name="Loveland J.E."/>
            <person name="Howe K.L."/>
            <person name="Andrews T.D."/>
            <person name="Searle S."/>
            <person name="Hunt S.E."/>
            <person name="Scott C.E."/>
            <person name="Jones M.C."/>
            <person name="Ainscough R."/>
            <person name="Almeida J.P."/>
            <person name="Ambrose K.D."/>
            <person name="Ashwell R.I.S."/>
            <person name="Babbage A.K."/>
            <person name="Babbage S."/>
            <person name="Bagguley C.L."/>
            <person name="Bailey J."/>
            <person name="Banerjee R."/>
            <person name="Barker D.J."/>
            <person name="Barlow K.F."/>
            <person name="Bates K."/>
            <person name="Beasley H."/>
            <person name="Beasley O."/>
            <person name="Bird C.P."/>
            <person name="Bray-Allen S."/>
            <person name="Brown A.J."/>
            <person name="Brown J.Y."/>
            <person name="Burford D."/>
            <person name="Burrill W."/>
            <person name="Burton J."/>
            <person name="Carder C."/>
            <person name="Carter N.P."/>
            <person name="Chapman J.C."/>
            <person name="Chen Y."/>
            <person name="Clarke G."/>
            <person name="Clark S.Y."/>
            <person name="Clee C.M."/>
            <person name="Clegg S."/>
            <person name="Collier R.E."/>
            <person name="Corby N."/>
            <person name="Crosier M."/>
            <person name="Cummings A.T."/>
            <person name="Davies J."/>
            <person name="Dhami P."/>
            <person name="Dunn M."/>
            <person name="Dutta I."/>
            <person name="Dyer L.W."/>
            <person name="Earthrowl M.E."/>
            <person name="Faulkner L."/>
            <person name="Fleming C.J."/>
            <person name="Frankish A."/>
            <person name="Frankland J.A."/>
            <person name="French L."/>
            <person name="Fricker D.G."/>
            <person name="Garner P."/>
            <person name="Garnett J."/>
            <person name="Ghori J."/>
            <person name="Gilbert J.G.R."/>
            <person name="Glison C."/>
            <person name="Grafham D.V."/>
            <person name="Gribble S."/>
            <person name="Griffiths C."/>
            <person name="Griffiths-Jones S."/>
            <person name="Grocock R."/>
            <person name="Guy J."/>
            <person name="Hall R.E."/>
            <person name="Hammond S."/>
            <person name="Harley J.L."/>
            <person name="Harrison E.S.I."/>
            <person name="Hart E.A."/>
            <person name="Heath P.D."/>
            <person name="Henderson C.D."/>
            <person name="Hopkins B.L."/>
            <person name="Howard P.J."/>
            <person name="Howden P.J."/>
            <person name="Huckle E."/>
            <person name="Johnson C."/>
            <person name="Johnson D."/>
            <person name="Joy A.A."/>
            <person name="Kay M."/>
            <person name="Keenan S."/>
            <person name="Kershaw J.K."/>
            <person name="Kimberley A.M."/>
            <person name="King A."/>
            <person name="Knights A."/>
            <person name="Laird G.K."/>
            <person name="Langford C."/>
            <person name="Lawlor S."/>
            <person name="Leongamornlert D.A."/>
            <person name="Leversha M."/>
            <person name="Lloyd C."/>
            <person name="Lloyd D.M."/>
            <person name="Lovell J."/>
            <person name="Martin S."/>
            <person name="Mashreghi-Mohammadi M."/>
            <person name="Matthews L."/>
            <person name="McLaren S."/>
            <person name="McLay K.E."/>
            <person name="McMurray A."/>
            <person name="Milne S."/>
            <person name="Nickerson T."/>
            <person name="Nisbett J."/>
            <person name="Nordsiek G."/>
            <person name="Pearce A.V."/>
            <person name="Peck A.I."/>
            <person name="Porter K.M."/>
            <person name="Pandian R."/>
            <person name="Pelan S."/>
            <person name="Phillimore B."/>
            <person name="Povey S."/>
            <person name="Ramsey Y."/>
            <person name="Rand V."/>
            <person name="Scharfe M."/>
            <person name="Sehra H.K."/>
            <person name="Shownkeen R."/>
            <person name="Sims S.K."/>
            <person name="Skuce C.D."/>
            <person name="Smith M."/>
            <person name="Steward C.A."/>
            <person name="Swarbreck D."/>
            <person name="Sycamore N."/>
            <person name="Tester J."/>
            <person name="Thorpe A."/>
            <person name="Tracey A."/>
            <person name="Tromans A."/>
            <person name="Thomas D.W."/>
            <person name="Wall M."/>
            <person name="Wallis J.M."/>
            <person name="West A.P."/>
            <person name="Whitehead S.L."/>
            <person name="Willey D.L."/>
            <person name="Williams S.A."/>
            <person name="Wilming L."/>
            <person name="Wray P.W."/>
            <person name="Young L."/>
            <person name="Ashurst J.L."/>
            <person name="Coulson A."/>
            <person name="Blocker H."/>
            <person name="Durbin R.M."/>
            <person name="Sulston J.E."/>
            <person name="Hubbard T."/>
            <person name="Jackson M.J."/>
            <person name="Bentley D.R."/>
            <person name="Beck S."/>
            <person name="Rogers J."/>
            <person name="Dunham I."/>
        </authorList>
    </citation>
    <scope>NUCLEOTIDE SEQUENCE [LARGE SCALE GENOMIC DNA]</scope>
</reference>
<reference key="5">
    <citation type="submission" date="2005-07" db="EMBL/GenBank/DDBJ databases">
        <authorList>
            <person name="Mural R.J."/>
            <person name="Istrail S."/>
            <person name="Sutton G.G."/>
            <person name="Florea L."/>
            <person name="Halpern A.L."/>
            <person name="Mobarry C.M."/>
            <person name="Lippert R."/>
            <person name="Walenz B."/>
            <person name="Shatkay H."/>
            <person name="Dew I."/>
            <person name="Miller J.R."/>
            <person name="Flanigan M.J."/>
            <person name="Edwards N.J."/>
            <person name="Bolanos R."/>
            <person name="Fasulo D."/>
            <person name="Halldorsson B.V."/>
            <person name="Hannenhalli S."/>
            <person name="Turner R."/>
            <person name="Yooseph S."/>
            <person name="Lu F."/>
            <person name="Nusskern D.R."/>
            <person name="Shue B.C."/>
            <person name="Zheng X.H."/>
            <person name="Zhong F."/>
            <person name="Delcher A.L."/>
            <person name="Huson D.H."/>
            <person name="Kravitz S.A."/>
            <person name="Mouchard L."/>
            <person name="Reinert K."/>
            <person name="Remington K.A."/>
            <person name="Clark A.G."/>
            <person name="Waterman M.S."/>
            <person name="Eichler E.E."/>
            <person name="Adams M.D."/>
            <person name="Hunkapiller M.W."/>
            <person name="Myers E.W."/>
            <person name="Venter J.C."/>
        </authorList>
    </citation>
    <scope>NUCLEOTIDE SEQUENCE [LARGE SCALE GENOMIC DNA]</scope>
</reference>
<reference key="6">
    <citation type="journal article" date="2004" name="Genome Res.">
        <title>The status, quality, and expansion of the NIH full-length cDNA project: the Mammalian Gene Collection (MGC).</title>
        <authorList>
            <consortium name="The MGC Project Team"/>
        </authorList>
    </citation>
    <scope>NUCLEOTIDE SEQUENCE [LARGE SCALE MRNA] (ISOFORMS 1 AND 2)</scope>
    <source>
        <tissue>Brain</tissue>
    </source>
</reference>
<reference key="7">
    <citation type="journal article" date="2002" name="Blood">
        <title>Erythroid expansion mediated by the Gfi-1B zinc finger protein: role in normal hematopoiesis.</title>
        <authorList>
            <person name="Osawa M."/>
            <person name="Yamaguchi T."/>
            <person name="Nakamura Y."/>
            <person name="Kaneko S."/>
            <person name="Onodera M."/>
            <person name="Sawada K."/>
            <person name="Jegalian A."/>
            <person name="Wu H."/>
            <person name="Nakauchi H."/>
            <person name="Iwama A."/>
        </authorList>
    </citation>
    <scope>FUNCTION</scope>
    <scope>TISSUE SPECIFICITY</scope>
</reference>
<reference key="8">
    <citation type="journal article" date="2003" name="J. Cell. Biochem.">
        <title>Gfi-1 attaches to the nuclear matrix, associates with ETO (MTG8) and histone deacetylase proteins, and represses transcription using a TSA-sensitive mechanism.</title>
        <authorList>
            <person name="McGhee L."/>
            <person name="Bryan J."/>
            <person name="Elliott L."/>
            <person name="Grimes H.L."/>
            <person name="Kazanjian A."/>
            <person name="Davis J.N."/>
            <person name="Meyers S."/>
        </authorList>
    </citation>
    <scope>INTERACTION WITH RUNX1T1</scope>
</reference>
<reference key="9">
    <citation type="journal article" date="2005" name="Nucleic Acids Res.">
        <title>GATA-1 mediates auto-regulation of Gfi-1B transcription in K562 cells.</title>
        <authorList>
            <person name="Huang D.-Y."/>
            <person name="Kuo Y.-Y."/>
            <person name="Chang Z.-F."/>
        </authorList>
    </citation>
    <scope>FUNCTION</scope>
    <scope>DNA-BINDING</scope>
    <scope>INTERACTION WITH GATA1</scope>
</reference>
<reference key="10">
    <citation type="journal article" date="2006" name="EMBO J.">
        <title>Gfi1b alters histone methylation at target gene promoters and sites of gamma-satellite containing heterochromatin.</title>
        <authorList>
            <person name="Vassen L."/>
            <person name="Fiolka K."/>
            <person name="Moeroey T."/>
        </authorList>
    </citation>
    <scope>FUNCTION</scope>
    <scope>SUBCELLULAR LOCATION</scope>
    <scope>INTERACTION WITH EHMT2 AND SUV39H1</scope>
</reference>
<reference key="11">
    <citation type="journal article" date="2006" name="Proc. Natl. Acad. Sci. U.S.A.">
        <title>Gene expression patterns define novel roles for E47 in cell cycle progression, cytokine-mediated signaling, and T lineage development.</title>
        <authorList>
            <person name="Schwartz R."/>
            <person name="Engel I."/>
            <person name="Fallahi-Sichani M."/>
            <person name="Petrie H.T."/>
            <person name="Murre C."/>
        </authorList>
    </citation>
    <scope>FUNCTION</scope>
</reference>
<reference key="12">
    <citation type="journal article" date="2007" name="Blood">
        <title>Gfi1 ubiquitination and proteasomal degradation is inhibited by the ubiquitin ligase Triad1.</title>
        <authorList>
            <person name="Marteijn J.A."/>
            <person name="van der Meer L.T."/>
            <person name="van Emst L."/>
            <person name="van Reijmersdal S."/>
            <person name="Wissink W."/>
            <person name="de Witte T."/>
            <person name="Jansen J.H."/>
            <person name="Van der Reijden B.A."/>
        </authorList>
    </citation>
    <scope>INTERACTION WITH ARIH2</scope>
</reference>
<reference key="13">
    <citation type="journal article" date="2007" name="Blood">
        <title>Growth factor independent 1B (Gfi1b) is an E2A target gene that modulates Gata3 in T-cell lymphomas.</title>
        <authorList>
            <person name="Wei X."/>
            <person name="Kee B.L."/>
        </authorList>
    </citation>
    <scope>FUNCTION</scope>
    <scope>DNA-BINDING</scope>
    <scope>MUTAGENESIS OF ASN-290</scope>
</reference>
<reference key="14">
    <citation type="journal article" date="2007" name="Br. J. Haematol.">
        <title>Growth factor-independent 1B gene (GFI1B) is overexpressed in erythropoietic and megakaryocytic malignancies and increases their proliferation rate.</title>
        <authorList>
            <person name="Elmaagacli A.H."/>
            <person name="Koldehoff M."/>
            <person name="Zakrzewski J.L."/>
            <person name="Steckel N.K."/>
            <person name="Ottinger H."/>
            <person name="Beelen D.W."/>
        </authorList>
    </citation>
    <scope>FUNCTION</scope>
    <scope>TISSUE SPECIFICITY</scope>
</reference>
<reference key="15">
    <citation type="journal article" date="2007" name="Mol. Cell. Biol.">
        <title>GATA-1 and Gfi-1B interplay to regulate Bcl-xL transcription.</title>
        <authorList>
            <person name="Kuo Y.-Y."/>
            <person name="Chang Z.-F."/>
        </authorList>
    </citation>
    <scope>FUNCTION</scope>
    <scope>INTERACTION WITH GATA1</scope>
</reference>
<reference key="16">
    <citation type="journal article" date="2012" name="J. Cell Sci.">
        <title>A short Gfi-1B isoform controls erythroid differentiation by recruiting the LSD1-CoREST complex through the dimethylation of its SNAG domain.</title>
        <authorList>
            <person name="Laurent B."/>
            <person name="Randrianarison-Huetz V."/>
            <person name="Frisan E."/>
            <person name="Andrieu-Soler C."/>
            <person name="Soler E."/>
            <person name="Fontenay M."/>
            <person name="Dusanter-Fourt I."/>
            <person name="Dumenil D."/>
        </authorList>
    </citation>
    <scope>FUNCTION (ISOFORM 2)</scope>
    <scope>METHYLATION AT LYS-8</scope>
</reference>
<reference key="17">
    <citation type="journal article" date="2013" name="J. Thromb. Haemost.">
        <title>GFI1B mutation causes a bleeding disorder with abnormal platelet function.</title>
        <authorList>
            <person name="Stevenson W.S."/>
            <person name="Morel-Kopp M.C."/>
            <person name="Chen Q."/>
            <person name="Liang H.P."/>
            <person name="Bromhead C.J."/>
            <person name="Wright S."/>
            <person name="Turakulov R."/>
            <person name="Ng A.P."/>
            <person name="Roberts A.W."/>
            <person name="Bahlo M."/>
            <person name="Ward C.M."/>
        </authorList>
    </citation>
    <scope>INVOLVEMENT IN BDPLT17</scope>
</reference>
<reference key="18">
    <citation type="journal article" date="2014" name="N. Engl. J. Med.">
        <title>A dominant-negative GFI1B mutation in the gray platelet syndrome.</title>
        <authorList>
            <person name="Monteferrario D."/>
            <person name="Bolar N.A."/>
            <person name="Marneth A.E."/>
            <person name="Hebeda K.M."/>
            <person name="Bergevoet S.M."/>
            <person name="Veenstra H."/>
            <person name="Laros-van Gorkom B.A."/>
            <person name="MacKenzie M.A."/>
            <person name="Khandanpour C."/>
            <person name="Botezatu L."/>
            <person name="Fransen E."/>
            <person name="Van Camp G."/>
            <person name="Duijnhouwer A.L."/>
            <person name="Salemink S."/>
            <person name="Willemsen B."/>
            <person name="Huls G."/>
            <person name="Preijers F."/>
            <person name="Van Heerde W."/>
            <person name="Jansen J.H."/>
            <person name="Kempers M.J."/>
            <person name="Loeys B.L."/>
            <person name="Van Laer L."/>
            <person name="Van der Reijden B.A."/>
        </authorList>
    </citation>
    <scope>INVOLVEMENT IN BDPLT17</scope>
</reference>
<reference key="19">
    <citation type="journal article" date="2006" name="Science">
        <title>The consensus coding sequences of human breast and colorectal cancers.</title>
        <authorList>
            <person name="Sjoeblom T."/>
            <person name="Jones S."/>
            <person name="Wood L.D."/>
            <person name="Parsons D.W."/>
            <person name="Lin J."/>
            <person name="Barber T.D."/>
            <person name="Mandelker D."/>
            <person name="Leary R.J."/>
            <person name="Ptak J."/>
            <person name="Silliman N."/>
            <person name="Szabo S."/>
            <person name="Buckhaults P."/>
            <person name="Farrell C."/>
            <person name="Meeh P."/>
            <person name="Markowitz S.D."/>
            <person name="Willis J."/>
            <person name="Dawson D."/>
            <person name="Willson J.K.V."/>
            <person name="Gazdar A.F."/>
            <person name="Hartigan J."/>
            <person name="Wu L."/>
            <person name="Liu C."/>
            <person name="Parmigiani G."/>
            <person name="Park B.H."/>
            <person name="Bachman K.E."/>
            <person name="Papadopoulos N."/>
            <person name="Vogelstein B."/>
            <person name="Kinzler K.W."/>
            <person name="Velculescu V.E."/>
        </authorList>
    </citation>
    <scope>VARIANT [LARGE SCALE ANALYSIS] HIS-231</scope>
</reference>
<accession>Q5VTD9</accession>
<accession>O95270</accession>
<accession>Q5VTD8</accession>
<accession>Q6FHZ2</accession>
<accession>Q6T888</accession>